<gene>
    <name evidence="2" type="primary">trmB</name>
    <name type="ordered locus">Bcer98_3362</name>
</gene>
<accession>A7GTW9</accession>
<name>TRMB_BACCN</name>
<protein>
    <recommendedName>
        <fullName evidence="2">tRNA (guanine-N(7)-)-methyltransferase</fullName>
        <ecNumber evidence="2">2.1.1.33</ecNumber>
    </recommendedName>
    <alternativeName>
        <fullName evidence="2">tRNA (guanine(46)-N(7))-methyltransferase</fullName>
    </alternativeName>
    <alternativeName>
        <fullName evidence="2">tRNA(m7G46)-methyltransferase</fullName>
    </alternativeName>
</protein>
<feature type="chain" id="PRO_1000084436" description="tRNA (guanine-N(7)-)-methyltransferase">
    <location>
        <begin position="1"/>
        <end position="217"/>
    </location>
</feature>
<feature type="active site" evidence="1">
    <location>
        <position position="118"/>
    </location>
</feature>
<feature type="binding site" evidence="2">
    <location>
        <position position="44"/>
    </location>
    <ligand>
        <name>S-adenosyl-L-methionine</name>
        <dbReference type="ChEBI" id="CHEBI:59789"/>
    </ligand>
</feature>
<feature type="binding site" evidence="2">
    <location>
        <position position="69"/>
    </location>
    <ligand>
        <name>S-adenosyl-L-methionine</name>
        <dbReference type="ChEBI" id="CHEBI:59789"/>
    </ligand>
</feature>
<feature type="binding site" evidence="2">
    <location>
        <position position="96"/>
    </location>
    <ligand>
        <name>S-adenosyl-L-methionine</name>
        <dbReference type="ChEBI" id="CHEBI:59789"/>
    </ligand>
</feature>
<feature type="binding site" evidence="2">
    <location>
        <position position="118"/>
    </location>
    <ligand>
        <name>S-adenosyl-L-methionine</name>
        <dbReference type="ChEBI" id="CHEBI:59789"/>
    </ligand>
</feature>
<feature type="binding site" evidence="2">
    <location>
        <position position="122"/>
    </location>
    <ligand>
        <name>substrate</name>
    </ligand>
</feature>
<feature type="binding site" evidence="2">
    <location>
        <position position="154"/>
    </location>
    <ligand>
        <name>substrate</name>
    </ligand>
</feature>
<feature type="binding site" evidence="2">
    <location>
        <begin position="191"/>
        <end position="194"/>
    </location>
    <ligand>
        <name>substrate</name>
    </ligand>
</feature>
<sequence length="217" mass="25730">MRLRHKPYAMDRIKEYSQFVIGNPEEHRGNWKELFGNDHPIHIEVGTGRGRFVYEMAKANPDINYIGIEKFTSVIVDALDKLIEKELPNLKLINKDAEDLTVFFTKGEIDRVYLNFSDPWPKKRHAKRRLTYKTFLRNYEEVLVKDGEIHFKTDNQALFEYSLMSMAEYGMVFTFLSLDLHNSDFEGNIMTEYEEKFSSKGHRIYRVEAKYRTEPVQ</sequence>
<keyword id="KW-0489">Methyltransferase</keyword>
<keyword id="KW-0949">S-adenosyl-L-methionine</keyword>
<keyword id="KW-0808">Transferase</keyword>
<keyword id="KW-0819">tRNA processing</keyword>
<organism>
    <name type="scientific">Bacillus cytotoxicus (strain DSM 22905 / CIP 110041 / 391-98 / NVH 391-98)</name>
    <dbReference type="NCBI Taxonomy" id="315749"/>
    <lineage>
        <taxon>Bacteria</taxon>
        <taxon>Bacillati</taxon>
        <taxon>Bacillota</taxon>
        <taxon>Bacilli</taxon>
        <taxon>Bacillales</taxon>
        <taxon>Bacillaceae</taxon>
        <taxon>Bacillus</taxon>
        <taxon>Bacillus cereus group</taxon>
    </lineage>
</organism>
<reference key="1">
    <citation type="journal article" date="2008" name="Chem. Biol. Interact.">
        <title>Extending the Bacillus cereus group genomics to putative food-borne pathogens of different toxicity.</title>
        <authorList>
            <person name="Lapidus A."/>
            <person name="Goltsman E."/>
            <person name="Auger S."/>
            <person name="Galleron N."/>
            <person name="Segurens B."/>
            <person name="Dossat C."/>
            <person name="Land M.L."/>
            <person name="Broussolle V."/>
            <person name="Brillard J."/>
            <person name="Guinebretiere M.-H."/>
            <person name="Sanchis V."/>
            <person name="Nguen-the C."/>
            <person name="Lereclus D."/>
            <person name="Richardson P."/>
            <person name="Wincker P."/>
            <person name="Weissenbach J."/>
            <person name="Ehrlich S.D."/>
            <person name="Sorokin A."/>
        </authorList>
    </citation>
    <scope>NUCLEOTIDE SEQUENCE [LARGE SCALE GENOMIC DNA]</scope>
    <source>
        <strain>DSM 22905 / CIP 110041 / 391-98 / NVH 391-98</strain>
    </source>
</reference>
<proteinExistence type="inferred from homology"/>
<comment type="function">
    <text evidence="2">Catalyzes the formation of N(7)-methylguanine at position 46 (m7G46) in tRNA.</text>
</comment>
<comment type="catalytic activity">
    <reaction evidence="2">
        <text>guanosine(46) in tRNA + S-adenosyl-L-methionine = N(7)-methylguanosine(46) in tRNA + S-adenosyl-L-homocysteine</text>
        <dbReference type="Rhea" id="RHEA:42708"/>
        <dbReference type="Rhea" id="RHEA-COMP:10188"/>
        <dbReference type="Rhea" id="RHEA-COMP:10189"/>
        <dbReference type="ChEBI" id="CHEBI:57856"/>
        <dbReference type="ChEBI" id="CHEBI:59789"/>
        <dbReference type="ChEBI" id="CHEBI:74269"/>
        <dbReference type="ChEBI" id="CHEBI:74480"/>
        <dbReference type="EC" id="2.1.1.33"/>
    </reaction>
</comment>
<comment type="pathway">
    <text evidence="2">tRNA modification; N(7)-methylguanine-tRNA biosynthesis.</text>
</comment>
<comment type="similarity">
    <text evidence="2">Belongs to the class I-like SAM-binding methyltransferase superfamily. TrmB family.</text>
</comment>
<evidence type="ECO:0000250" key="1"/>
<evidence type="ECO:0000255" key="2">
    <source>
        <dbReference type="HAMAP-Rule" id="MF_01057"/>
    </source>
</evidence>
<dbReference type="EC" id="2.1.1.33" evidence="2"/>
<dbReference type="EMBL" id="CP000764">
    <property type="protein sequence ID" value="ABS23577.1"/>
    <property type="molecule type" value="Genomic_DNA"/>
</dbReference>
<dbReference type="RefSeq" id="WP_012095821.1">
    <property type="nucleotide sequence ID" value="NC_009674.1"/>
</dbReference>
<dbReference type="SMR" id="A7GTW9"/>
<dbReference type="STRING" id="315749.Bcer98_3362"/>
<dbReference type="GeneID" id="33898604"/>
<dbReference type="KEGG" id="bcy:Bcer98_3362"/>
<dbReference type="eggNOG" id="COG0220">
    <property type="taxonomic scope" value="Bacteria"/>
</dbReference>
<dbReference type="HOGENOM" id="CLU_050910_2_1_9"/>
<dbReference type="OrthoDB" id="9802090at2"/>
<dbReference type="UniPathway" id="UPA00989"/>
<dbReference type="Proteomes" id="UP000002300">
    <property type="component" value="Chromosome"/>
</dbReference>
<dbReference type="GO" id="GO:0043527">
    <property type="term" value="C:tRNA methyltransferase complex"/>
    <property type="evidence" value="ECO:0007669"/>
    <property type="project" value="TreeGrafter"/>
</dbReference>
<dbReference type="GO" id="GO:0008176">
    <property type="term" value="F:tRNA (guanine(46)-N7)-methyltransferase activity"/>
    <property type="evidence" value="ECO:0007669"/>
    <property type="project" value="UniProtKB-UniRule"/>
</dbReference>
<dbReference type="CDD" id="cd02440">
    <property type="entry name" value="AdoMet_MTases"/>
    <property type="match status" value="1"/>
</dbReference>
<dbReference type="FunFam" id="3.40.50.150:FF:000035">
    <property type="entry name" value="tRNA (guanine-N(7)-)-methyltransferase"/>
    <property type="match status" value="1"/>
</dbReference>
<dbReference type="Gene3D" id="3.40.50.150">
    <property type="entry name" value="Vaccinia Virus protein VP39"/>
    <property type="match status" value="1"/>
</dbReference>
<dbReference type="HAMAP" id="MF_01057">
    <property type="entry name" value="tRNA_methyltr_TrmB"/>
    <property type="match status" value="1"/>
</dbReference>
<dbReference type="InterPro" id="IPR029063">
    <property type="entry name" value="SAM-dependent_MTases_sf"/>
</dbReference>
<dbReference type="InterPro" id="IPR003358">
    <property type="entry name" value="tRNA_(Gua-N-7)_MeTrfase_Trmb"/>
</dbReference>
<dbReference type="InterPro" id="IPR055361">
    <property type="entry name" value="tRNA_methyltr_TrmB_bact"/>
</dbReference>
<dbReference type="NCBIfam" id="NF001080">
    <property type="entry name" value="PRK00121.2-2"/>
    <property type="match status" value="1"/>
</dbReference>
<dbReference type="NCBIfam" id="TIGR00091">
    <property type="entry name" value="tRNA (guanosine(46)-N7)-methyltransferase TrmB"/>
    <property type="match status" value="1"/>
</dbReference>
<dbReference type="PANTHER" id="PTHR23417">
    <property type="entry name" value="3-DEOXY-D-MANNO-OCTULOSONIC-ACID TRANSFERASE/TRNA GUANINE-N 7 - -METHYLTRANSFERASE"/>
    <property type="match status" value="1"/>
</dbReference>
<dbReference type="PANTHER" id="PTHR23417:SF14">
    <property type="entry name" value="PENTACOTRIPEPTIDE-REPEAT REGION OF PRORP DOMAIN-CONTAINING PROTEIN"/>
    <property type="match status" value="1"/>
</dbReference>
<dbReference type="Pfam" id="PF02390">
    <property type="entry name" value="Methyltransf_4"/>
    <property type="match status" value="1"/>
</dbReference>
<dbReference type="SUPFAM" id="SSF53335">
    <property type="entry name" value="S-adenosyl-L-methionine-dependent methyltransferases"/>
    <property type="match status" value="1"/>
</dbReference>
<dbReference type="PROSITE" id="PS51625">
    <property type="entry name" value="SAM_MT_TRMB"/>
    <property type="match status" value="1"/>
</dbReference>